<proteinExistence type="evidence at transcript level"/>
<name>MT1B_ORYSJ</name>
<protein>
    <recommendedName>
        <fullName>Metallothionein-like protein 1B</fullName>
    </recommendedName>
    <alternativeName>
        <fullName>Class I metallothionein-like protein 1B</fullName>
    </alternativeName>
    <alternativeName>
        <fullName>OsMT-I-1b</fullName>
    </alternativeName>
</protein>
<keyword id="KW-0479">Metal-binding</keyword>
<keyword id="KW-0480">Metal-thiolate cluster</keyword>
<keyword id="KW-1185">Reference proteome</keyword>
<sequence>MSCSCGSSCGCGSNCTCGKMYPDLEEKSSSAQATVVLGVAPEKAHFEAAAESGETAHGCGCGSSCKCNPCNC</sequence>
<accession>Q10N03</accession>
<accession>A3AGU4</accession>
<comment type="function">
    <text evidence="2 3">Metallothioneins have a high content of cysteine residues that bind various heavy metals (Probable). Functions as a metal chelator of nickel (Ni), cadmium (Cd), zinc (Zn) and copper (Cu). Possesses higher affinity for Ni and Cd ions compared to Zn and Cu ions (PubMed:23385446).</text>
</comment>
<comment type="tissue specificity">
    <text evidence="1">Expressed in leaves of mature plants.</text>
</comment>
<comment type="similarity">
    <text evidence="3">Belongs to the metallothionein superfamily. Type 15 family.</text>
</comment>
<gene>
    <name type="primary">MT1B</name>
    <name type="ordered locus">Os03g0288000</name>
    <name type="ordered locus">LOC_Os03g17870</name>
    <name evidence="4" type="ORF">OsJ_10428</name>
</gene>
<evidence type="ECO:0000269" key="1">
    <source>
    </source>
</evidence>
<evidence type="ECO:0000269" key="2">
    <source>
    </source>
</evidence>
<evidence type="ECO:0000305" key="3"/>
<evidence type="ECO:0000312" key="4">
    <source>
        <dbReference type="EMBL" id="EAZ26533.1"/>
    </source>
</evidence>
<feature type="chain" id="PRO_0000263055" description="Metallothionein-like protein 1B">
    <location>
        <begin position="1"/>
        <end position="72"/>
    </location>
</feature>
<reference key="1">
    <citation type="journal article" date="2005" name="Genome Res.">
        <title>Sequence, annotation, and analysis of synteny between rice chromosome 3 and diverged grass species.</title>
        <authorList>
            <consortium name="The rice chromosome 3 sequencing consortium"/>
            <person name="Buell C.R."/>
            <person name="Yuan Q."/>
            <person name="Ouyang S."/>
            <person name="Liu J."/>
            <person name="Zhu W."/>
            <person name="Wang A."/>
            <person name="Maiti R."/>
            <person name="Haas B."/>
            <person name="Wortman J."/>
            <person name="Pertea M."/>
            <person name="Jones K.M."/>
            <person name="Kim M."/>
            <person name="Overton L."/>
            <person name="Tsitrin T."/>
            <person name="Fadrosh D."/>
            <person name="Bera J."/>
            <person name="Weaver B."/>
            <person name="Jin S."/>
            <person name="Johri S."/>
            <person name="Reardon M."/>
            <person name="Webb K."/>
            <person name="Hill J."/>
            <person name="Moffat K."/>
            <person name="Tallon L."/>
            <person name="Van Aken S."/>
            <person name="Lewis M."/>
            <person name="Utterback T."/>
            <person name="Feldblyum T."/>
            <person name="Zismann V."/>
            <person name="Iobst S."/>
            <person name="Hsiao J."/>
            <person name="de Vazeille A.R."/>
            <person name="Salzberg S.L."/>
            <person name="White O."/>
            <person name="Fraser C.M."/>
            <person name="Yu Y."/>
            <person name="Kim H."/>
            <person name="Rambo T."/>
            <person name="Currie J."/>
            <person name="Collura K."/>
            <person name="Kernodle-Thompson S."/>
            <person name="Wei F."/>
            <person name="Kudrna K."/>
            <person name="Ammiraju J.S.S."/>
            <person name="Luo M."/>
            <person name="Goicoechea J.L."/>
            <person name="Wing R.A."/>
            <person name="Henry D."/>
            <person name="Oates R."/>
            <person name="Palmer M."/>
            <person name="Pries G."/>
            <person name="Saski C."/>
            <person name="Simmons J."/>
            <person name="Soderlund C."/>
            <person name="Nelson W."/>
            <person name="de la Bastide M."/>
            <person name="Spiegel L."/>
            <person name="Nascimento L."/>
            <person name="Huang E."/>
            <person name="Preston R."/>
            <person name="Zutavern T."/>
            <person name="Palmer L."/>
            <person name="O'Shaughnessy A."/>
            <person name="Dike S."/>
            <person name="McCombie W.R."/>
            <person name="Minx P."/>
            <person name="Cordum H."/>
            <person name="Wilson R."/>
            <person name="Jin W."/>
            <person name="Lee H.R."/>
            <person name="Jiang J."/>
            <person name="Jackson S."/>
        </authorList>
    </citation>
    <scope>NUCLEOTIDE SEQUENCE [LARGE SCALE GENOMIC DNA]</scope>
    <source>
        <strain>cv. Nipponbare</strain>
    </source>
</reference>
<reference key="2">
    <citation type="journal article" date="2005" name="Nature">
        <title>The map-based sequence of the rice genome.</title>
        <authorList>
            <consortium name="International rice genome sequencing project (IRGSP)"/>
        </authorList>
    </citation>
    <scope>NUCLEOTIDE SEQUENCE [LARGE SCALE GENOMIC DNA]</scope>
    <source>
        <strain>cv. Nipponbare</strain>
    </source>
</reference>
<reference key="3">
    <citation type="journal article" date="2008" name="Nucleic Acids Res.">
        <title>The rice annotation project database (RAP-DB): 2008 update.</title>
        <authorList>
            <consortium name="The rice annotation project (RAP)"/>
        </authorList>
    </citation>
    <scope>GENOME REANNOTATION</scope>
    <source>
        <strain>cv. Nipponbare</strain>
    </source>
</reference>
<reference key="4">
    <citation type="journal article" date="2013" name="Rice">
        <title>Improvement of the Oryza sativa Nipponbare reference genome using next generation sequence and optical map data.</title>
        <authorList>
            <person name="Kawahara Y."/>
            <person name="de la Bastide M."/>
            <person name="Hamilton J.P."/>
            <person name="Kanamori H."/>
            <person name="McCombie W.R."/>
            <person name="Ouyang S."/>
            <person name="Schwartz D.C."/>
            <person name="Tanaka T."/>
            <person name="Wu J."/>
            <person name="Zhou S."/>
            <person name="Childs K.L."/>
            <person name="Davidson R.M."/>
            <person name="Lin H."/>
            <person name="Quesada-Ocampo L."/>
            <person name="Vaillancourt B."/>
            <person name="Sakai H."/>
            <person name="Lee S.S."/>
            <person name="Kim J."/>
            <person name="Numa H."/>
            <person name="Itoh T."/>
            <person name="Buell C.R."/>
            <person name="Matsumoto T."/>
        </authorList>
    </citation>
    <scope>GENOME REANNOTATION</scope>
    <source>
        <strain>cv. Nipponbare</strain>
    </source>
</reference>
<reference key="5">
    <citation type="journal article" date="2005" name="PLoS Biol.">
        <title>The genomes of Oryza sativa: a history of duplications.</title>
        <authorList>
            <person name="Yu J."/>
            <person name="Wang J."/>
            <person name="Lin W."/>
            <person name="Li S."/>
            <person name="Li H."/>
            <person name="Zhou J."/>
            <person name="Ni P."/>
            <person name="Dong W."/>
            <person name="Hu S."/>
            <person name="Zeng C."/>
            <person name="Zhang J."/>
            <person name="Zhang Y."/>
            <person name="Li R."/>
            <person name="Xu Z."/>
            <person name="Li S."/>
            <person name="Li X."/>
            <person name="Zheng H."/>
            <person name="Cong L."/>
            <person name="Lin L."/>
            <person name="Yin J."/>
            <person name="Geng J."/>
            <person name="Li G."/>
            <person name="Shi J."/>
            <person name="Liu J."/>
            <person name="Lv H."/>
            <person name="Li J."/>
            <person name="Wang J."/>
            <person name="Deng Y."/>
            <person name="Ran L."/>
            <person name="Shi X."/>
            <person name="Wang X."/>
            <person name="Wu Q."/>
            <person name="Li C."/>
            <person name="Ren X."/>
            <person name="Wang J."/>
            <person name="Wang X."/>
            <person name="Li D."/>
            <person name="Liu D."/>
            <person name="Zhang X."/>
            <person name="Ji Z."/>
            <person name="Zhao W."/>
            <person name="Sun Y."/>
            <person name="Zhang Z."/>
            <person name="Bao J."/>
            <person name="Han Y."/>
            <person name="Dong L."/>
            <person name="Ji J."/>
            <person name="Chen P."/>
            <person name="Wu S."/>
            <person name="Liu J."/>
            <person name="Xiao Y."/>
            <person name="Bu D."/>
            <person name="Tan J."/>
            <person name="Yang L."/>
            <person name="Ye C."/>
            <person name="Zhang J."/>
            <person name="Xu J."/>
            <person name="Zhou Y."/>
            <person name="Yu Y."/>
            <person name="Zhang B."/>
            <person name="Zhuang S."/>
            <person name="Wei H."/>
            <person name="Liu B."/>
            <person name="Lei M."/>
            <person name="Yu H."/>
            <person name="Li Y."/>
            <person name="Xu H."/>
            <person name="Wei S."/>
            <person name="He X."/>
            <person name="Fang L."/>
            <person name="Zhang Z."/>
            <person name="Zhang Y."/>
            <person name="Huang X."/>
            <person name="Su Z."/>
            <person name="Tong W."/>
            <person name="Li J."/>
            <person name="Tong Z."/>
            <person name="Li S."/>
            <person name="Ye J."/>
            <person name="Wang L."/>
            <person name="Fang L."/>
            <person name="Lei T."/>
            <person name="Chen C.-S."/>
            <person name="Chen H.-C."/>
            <person name="Xu Z."/>
            <person name="Li H."/>
            <person name="Huang H."/>
            <person name="Zhang F."/>
            <person name="Xu H."/>
            <person name="Li N."/>
            <person name="Zhao C."/>
            <person name="Li S."/>
            <person name="Dong L."/>
            <person name="Huang Y."/>
            <person name="Li L."/>
            <person name="Xi Y."/>
            <person name="Qi Q."/>
            <person name="Li W."/>
            <person name="Zhang B."/>
            <person name="Hu W."/>
            <person name="Zhang Y."/>
            <person name="Tian X."/>
            <person name="Jiao Y."/>
            <person name="Liang X."/>
            <person name="Jin J."/>
            <person name="Gao L."/>
            <person name="Zheng W."/>
            <person name="Hao B."/>
            <person name="Liu S.-M."/>
            <person name="Wang W."/>
            <person name="Yuan L."/>
            <person name="Cao M."/>
            <person name="McDermott J."/>
            <person name="Samudrala R."/>
            <person name="Wang J."/>
            <person name="Wong G.K.-S."/>
            <person name="Yang H."/>
        </authorList>
    </citation>
    <scope>NUCLEOTIDE SEQUENCE [LARGE SCALE GENOMIC DNA]</scope>
    <source>
        <strain>cv. Nipponbare</strain>
    </source>
</reference>
<reference key="6">
    <citation type="journal article" date="2003" name="Science">
        <title>Collection, mapping, and annotation of over 28,000 cDNA clones from japonica rice.</title>
        <authorList>
            <consortium name="The rice full-length cDNA consortium"/>
        </authorList>
    </citation>
    <scope>NUCLEOTIDE SEQUENCE [LARGE SCALE MRNA]</scope>
    <source>
        <strain>cv. Nipponbare</strain>
    </source>
</reference>
<reference key="7">
    <citation type="journal article" date="2006" name="J. Biochem. Mol. Biol.">
        <title>Molecular analyses of the metallothionein gene family in rice (Oryza sativa L.).</title>
        <authorList>
            <person name="Zhou G."/>
            <person name="Xu Y."/>
            <person name="Li J."/>
            <person name="Yang L."/>
            <person name="Liu J.-Y."/>
        </authorList>
    </citation>
    <scope>GENE FAMILY</scope>
    <scope>TISSUE SPECIFICITY</scope>
</reference>
<reference key="8">
    <citation type="journal article" date="2013" name="Protein J.">
        <title>Heterologous expression and metal-binding characterization of a type 1 metallothionein isoform (OsMTI-1b) from rice (Oryza sativa).</title>
        <authorList>
            <person name="Nezhad R.M."/>
            <person name="Shahpiri A."/>
            <person name="Mirlohi A."/>
        </authorList>
    </citation>
    <scope>FUNCTION</scope>
</reference>
<dbReference type="EMBL" id="DP000009">
    <property type="protein sequence ID" value="ABF95371.1"/>
    <property type="molecule type" value="Genomic_DNA"/>
</dbReference>
<dbReference type="EMBL" id="AP008209">
    <property type="protein sequence ID" value="BAF11696.1"/>
    <property type="molecule type" value="Genomic_DNA"/>
</dbReference>
<dbReference type="EMBL" id="AP014959">
    <property type="protein sequence ID" value="BAS83644.1"/>
    <property type="molecule type" value="Genomic_DNA"/>
</dbReference>
<dbReference type="EMBL" id="CM000140">
    <property type="protein sequence ID" value="EAZ26533.1"/>
    <property type="molecule type" value="Genomic_DNA"/>
</dbReference>
<dbReference type="EMBL" id="AK059587">
    <property type="protein sequence ID" value="BAG87041.1"/>
    <property type="molecule type" value="mRNA"/>
</dbReference>
<dbReference type="EMBL" id="AK103162">
    <property type="protein sequence ID" value="BAG95928.1"/>
    <property type="molecule type" value="mRNA"/>
</dbReference>
<dbReference type="RefSeq" id="XP_015628821.1">
    <property type="nucleotide sequence ID" value="XM_015773335.1"/>
</dbReference>
<dbReference type="STRING" id="39947.Q10N03"/>
<dbReference type="PaxDb" id="39947-Q10N03"/>
<dbReference type="EnsemblPlants" id="Os03t0288000-01">
    <property type="protein sequence ID" value="Os03t0288000-01"/>
    <property type="gene ID" value="Os03g0288000"/>
</dbReference>
<dbReference type="EnsemblPlants" id="Os03t0288000-02">
    <property type="protein sequence ID" value="Os03t0288000-02"/>
    <property type="gene ID" value="Os03g0288000"/>
</dbReference>
<dbReference type="Gramene" id="Os03t0288000-01">
    <property type="protein sequence ID" value="Os03t0288000-01"/>
    <property type="gene ID" value="Os03g0288000"/>
</dbReference>
<dbReference type="Gramene" id="Os03t0288000-02">
    <property type="protein sequence ID" value="Os03t0288000-02"/>
    <property type="gene ID" value="Os03g0288000"/>
</dbReference>
<dbReference type="KEGG" id="dosa:Os03g0288000"/>
<dbReference type="eggNOG" id="KOG4738">
    <property type="taxonomic scope" value="Eukaryota"/>
</dbReference>
<dbReference type="HOGENOM" id="CLU_161105_1_0_1"/>
<dbReference type="InParanoid" id="Q10N03"/>
<dbReference type="OMA" id="AGNDVEY"/>
<dbReference type="OrthoDB" id="678987at2759"/>
<dbReference type="Proteomes" id="UP000000763">
    <property type="component" value="Chromosome 3"/>
</dbReference>
<dbReference type="Proteomes" id="UP000007752">
    <property type="component" value="Chromosome 3"/>
</dbReference>
<dbReference type="Proteomes" id="UP000059680">
    <property type="component" value="Chromosome 3"/>
</dbReference>
<dbReference type="GO" id="GO:0046870">
    <property type="term" value="F:cadmium ion binding"/>
    <property type="evidence" value="ECO:0000314"/>
    <property type="project" value="UniProtKB"/>
</dbReference>
<dbReference type="GO" id="GO:0005507">
    <property type="term" value="F:copper ion binding"/>
    <property type="evidence" value="ECO:0000314"/>
    <property type="project" value="UniProtKB"/>
</dbReference>
<dbReference type="GO" id="GO:0016151">
    <property type="term" value="F:nickel cation binding"/>
    <property type="evidence" value="ECO:0000314"/>
    <property type="project" value="UniProtKB"/>
</dbReference>
<dbReference type="GO" id="GO:0008270">
    <property type="term" value="F:zinc ion binding"/>
    <property type="evidence" value="ECO:0000314"/>
    <property type="project" value="UniProtKB"/>
</dbReference>
<dbReference type="InterPro" id="IPR000347">
    <property type="entry name" value="Metalthion_15p"/>
</dbReference>
<dbReference type="PANTHER" id="PTHR33543:SF15">
    <property type="entry name" value="METALLOTHIONEIN-LIKE PROTEIN 1A"/>
    <property type="match status" value="1"/>
</dbReference>
<dbReference type="PANTHER" id="PTHR33543">
    <property type="entry name" value="METALLOTHIONEIN-LIKE PROTEIN 2A"/>
    <property type="match status" value="1"/>
</dbReference>
<dbReference type="Pfam" id="PF01439">
    <property type="entry name" value="Metallothio_2"/>
    <property type="match status" value="1"/>
</dbReference>
<organism>
    <name type="scientific">Oryza sativa subsp. japonica</name>
    <name type="common">Rice</name>
    <dbReference type="NCBI Taxonomy" id="39947"/>
    <lineage>
        <taxon>Eukaryota</taxon>
        <taxon>Viridiplantae</taxon>
        <taxon>Streptophyta</taxon>
        <taxon>Embryophyta</taxon>
        <taxon>Tracheophyta</taxon>
        <taxon>Spermatophyta</taxon>
        <taxon>Magnoliopsida</taxon>
        <taxon>Liliopsida</taxon>
        <taxon>Poales</taxon>
        <taxon>Poaceae</taxon>
        <taxon>BOP clade</taxon>
        <taxon>Oryzoideae</taxon>
        <taxon>Oryzeae</taxon>
        <taxon>Oryzinae</taxon>
        <taxon>Oryza</taxon>
        <taxon>Oryza sativa</taxon>
    </lineage>
</organism>